<sequence>MSNQFGDTRIDDDLTLLSETLEEVLRSSGDPADQKYVELKARAEKALDDVKKRVSQASDSYYYRAKQAVYRADDYVHEKPWQGIGVGAAVGLVLGLLLARR</sequence>
<feature type="chain" id="PRO_0000086947" description="Protein ElaB">
    <location>
        <begin position="1"/>
        <end position="101"/>
    </location>
</feature>
<feature type="transmembrane region" description="Helical" evidence="1">
    <location>
        <begin position="80"/>
        <end position="99"/>
    </location>
</feature>
<feature type="modified residue" description="N6-acetyllysine" evidence="2">
    <location>
        <position position="35"/>
    </location>
</feature>
<name>ELAB_ECOLI</name>
<gene>
    <name type="primary">elaB</name>
    <name type="synonym">yfbD</name>
    <name type="ordered locus">b2266</name>
    <name type="ordered locus">JW2261</name>
</gene>
<accession>P0AEH5</accession>
<accession>P52084</accession>
<accession>Q47010</accession>
<comment type="subunit">
    <text>Upon overexpression binds to ribosomes.</text>
</comment>
<comment type="interaction">
    <interactant intactId="EBI-552130">
        <id>P0AEH5</id>
    </interactant>
    <interactant intactId="EBI-554166">
        <id>P0AEY3</id>
        <label>mazG</label>
    </interactant>
    <organismsDiffer>false</organismsDiffer>
    <experiments>2</experiments>
</comment>
<comment type="subcellular location">
    <subcellularLocation>
        <location evidence="4">Cell inner membrane</location>
        <topology evidence="4">Single-pass membrane protein</topology>
    </subcellularLocation>
</comment>
<comment type="induction">
    <text evidence="3">Maximally expressed between 6 and 12 hours of growth, in early stationary phase.</text>
</comment>
<comment type="similarity">
    <text evidence="4">Belongs to the ElaB/YgaM/YqjD family.</text>
</comment>
<comment type="sequence caution" evidence="4">
    <conflict type="frameshift">
        <sequence resource="EMBL" id="Z50849"/>
    </conflict>
</comment>
<reference key="1">
    <citation type="journal article" date="1996" name="FEBS Lett.">
        <title>An isochorismate hydroxymutase isogene in Escherichia coli.</title>
        <authorList>
            <person name="Mueller R."/>
            <person name="Dahm C."/>
            <person name="Schulte G."/>
            <person name="Leistner E."/>
        </authorList>
    </citation>
    <scope>NUCLEOTIDE SEQUENCE [GENOMIC DNA]</scope>
    <source>
        <strain>K12 / MC4100 / ATCC 35695 / DSM 6574</strain>
    </source>
</reference>
<reference key="2">
    <citation type="submission" date="1996-06" db="EMBL/GenBank/DDBJ databases">
        <title>Characterization of the ela locus from Escherichia coli.</title>
        <authorList>
            <person name="Huisman G.W."/>
        </authorList>
    </citation>
    <scope>NUCLEOTIDE SEQUENCE [GENOMIC DNA]</scope>
    <source>
        <strain>K12</strain>
    </source>
</reference>
<reference key="3">
    <citation type="journal article" date="1997" name="DNA Res.">
        <title>Construction of a contiguous 874-kb sequence of the Escherichia coli-K12 genome corresponding to 50.0-68.8 min on the linkage map and analysis of its sequence features.</title>
        <authorList>
            <person name="Yamamoto Y."/>
            <person name="Aiba H."/>
            <person name="Baba T."/>
            <person name="Hayashi K."/>
            <person name="Inada T."/>
            <person name="Isono K."/>
            <person name="Itoh T."/>
            <person name="Kimura S."/>
            <person name="Kitagawa M."/>
            <person name="Makino K."/>
            <person name="Miki T."/>
            <person name="Mitsuhashi N."/>
            <person name="Mizobuchi K."/>
            <person name="Mori H."/>
            <person name="Nakade S."/>
            <person name="Nakamura Y."/>
            <person name="Nashimoto H."/>
            <person name="Oshima T."/>
            <person name="Oyama S."/>
            <person name="Saito N."/>
            <person name="Sampei G."/>
            <person name="Satoh Y."/>
            <person name="Sivasundaram S."/>
            <person name="Tagami H."/>
            <person name="Takahashi H."/>
            <person name="Takeda J."/>
            <person name="Takemoto K."/>
            <person name="Uehara K."/>
            <person name="Wada C."/>
            <person name="Yamagata S."/>
            <person name="Horiuchi T."/>
        </authorList>
    </citation>
    <scope>NUCLEOTIDE SEQUENCE [LARGE SCALE GENOMIC DNA]</scope>
    <source>
        <strain>K12 / W3110 / ATCC 27325 / DSM 5911</strain>
    </source>
</reference>
<reference key="4">
    <citation type="journal article" date="1997" name="Science">
        <title>The complete genome sequence of Escherichia coli K-12.</title>
        <authorList>
            <person name="Blattner F.R."/>
            <person name="Plunkett G. III"/>
            <person name="Bloch C.A."/>
            <person name="Perna N.T."/>
            <person name="Burland V."/>
            <person name="Riley M."/>
            <person name="Collado-Vides J."/>
            <person name="Glasner J.D."/>
            <person name="Rode C.K."/>
            <person name="Mayhew G.F."/>
            <person name="Gregor J."/>
            <person name="Davis N.W."/>
            <person name="Kirkpatrick H.A."/>
            <person name="Goeden M.A."/>
            <person name="Rose D.J."/>
            <person name="Mau B."/>
            <person name="Shao Y."/>
        </authorList>
    </citation>
    <scope>NUCLEOTIDE SEQUENCE [LARGE SCALE GENOMIC DNA]</scope>
    <source>
        <strain>K12 / MG1655 / ATCC 47076</strain>
    </source>
</reference>
<reference key="5">
    <citation type="journal article" date="2006" name="Mol. Syst. Biol.">
        <title>Highly accurate genome sequences of Escherichia coli K-12 strains MG1655 and W3110.</title>
        <authorList>
            <person name="Hayashi K."/>
            <person name="Morooka N."/>
            <person name="Yamamoto Y."/>
            <person name="Fujita K."/>
            <person name="Isono K."/>
            <person name="Choi S."/>
            <person name="Ohtsubo E."/>
            <person name="Baba T."/>
            <person name="Wanner B.L."/>
            <person name="Mori H."/>
            <person name="Horiuchi T."/>
        </authorList>
    </citation>
    <scope>NUCLEOTIDE SEQUENCE [LARGE SCALE GENOMIC DNA]</scope>
    <source>
        <strain>K12 / W3110 / ATCC 27325 / DSM 5911</strain>
    </source>
</reference>
<reference key="6">
    <citation type="unpublished observations" date="1996-03">
        <authorList>
            <person name="Rudd K.E."/>
        </authorList>
    </citation>
    <scope>IDENTIFICATION</scope>
</reference>
<reference key="7">
    <citation type="journal article" date="2009" name="Mol. Cell. Proteomics">
        <title>Lysine acetylation is a highly abundant and evolutionarily conserved modification in Escherichia coli.</title>
        <authorList>
            <person name="Zhang J."/>
            <person name="Sprung R."/>
            <person name="Pei J."/>
            <person name="Tan X."/>
            <person name="Kim S."/>
            <person name="Zhu H."/>
            <person name="Liu C.F."/>
            <person name="Grishin N.V."/>
            <person name="Zhao Y."/>
        </authorList>
    </citation>
    <scope>ACETYLATION [LARGE SCALE ANALYSIS] AT LYS-35</scope>
    <scope>IDENTIFICATION BY MASS SPECTROMETRY</scope>
    <source>
        <strain>K12 / JW1106</strain>
        <strain>K12 / MG1655 / ATCC 47076</strain>
    </source>
</reference>
<reference key="8">
    <citation type="journal article" date="2012" name="J. Bacteriol.">
        <title>YqjD is an inner membrane protein associated with stationary-phase ribosomes in Escherichia coli.</title>
        <authorList>
            <person name="Yoshida H."/>
            <person name="Maki Y."/>
            <person name="Furuike S."/>
            <person name="Sakai A."/>
            <person name="Ueta M."/>
            <person name="Wada A."/>
        </authorList>
    </citation>
    <scope>RIBOSOME-BINDING</scope>
    <scope>INDUCTION</scope>
    <source>
        <strain>K12 / W3110 / ATCC 27325 / DSM 5911</strain>
    </source>
</reference>
<organism>
    <name type="scientific">Escherichia coli (strain K12)</name>
    <dbReference type="NCBI Taxonomy" id="83333"/>
    <lineage>
        <taxon>Bacteria</taxon>
        <taxon>Pseudomonadati</taxon>
        <taxon>Pseudomonadota</taxon>
        <taxon>Gammaproteobacteria</taxon>
        <taxon>Enterobacterales</taxon>
        <taxon>Enterobacteriaceae</taxon>
        <taxon>Escherichia</taxon>
    </lineage>
</organism>
<protein>
    <recommendedName>
        <fullName>Protein ElaB</fullName>
    </recommendedName>
</protein>
<proteinExistence type="evidence at protein level"/>
<keyword id="KW-0007">Acetylation</keyword>
<keyword id="KW-0997">Cell inner membrane</keyword>
<keyword id="KW-1003">Cell membrane</keyword>
<keyword id="KW-0472">Membrane</keyword>
<keyword id="KW-1185">Reference proteome</keyword>
<keyword id="KW-0812">Transmembrane</keyword>
<keyword id="KW-1133">Transmembrane helix</keyword>
<dbReference type="EMBL" id="Z50849">
    <property type="status" value="NOT_ANNOTATED_CDS"/>
    <property type="molecule type" value="Genomic_DNA"/>
</dbReference>
<dbReference type="EMBL" id="U58768">
    <property type="protein sequence ID" value="AAB02730.1"/>
    <property type="molecule type" value="Genomic_DNA"/>
</dbReference>
<dbReference type="EMBL" id="U00096">
    <property type="protein sequence ID" value="AAC75326.1"/>
    <property type="molecule type" value="Genomic_DNA"/>
</dbReference>
<dbReference type="EMBL" id="AP009048">
    <property type="protein sequence ID" value="BAA16093.1"/>
    <property type="molecule type" value="Genomic_DNA"/>
</dbReference>
<dbReference type="PIR" id="H64997">
    <property type="entry name" value="H64997"/>
</dbReference>
<dbReference type="RefSeq" id="NP_416769.1">
    <property type="nucleotide sequence ID" value="NC_000913.3"/>
</dbReference>
<dbReference type="RefSeq" id="WP_000070621.1">
    <property type="nucleotide sequence ID" value="NZ_SSZK01000006.1"/>
</dbReference>
<dbReference type="SMR" id="P0AEH5"/>
<dbReference type="BioGRID" id="4260520">
    <property type="interactions" value="13"/>
</dbReference>
<dbReference type="BioGRID" id="851092">
    <property type="interactions" value="1"/>
</dbReference>
<dbReference type="DIP" id="DIP-47919N"/>
<dbReference type="FunCoup" id="P0AEH5">
    <property type="interactions" value="249"/>
</dbReference>
<dbReference type="IntAct" id="P0AEH5">
    <property type="interactions" value="11"/>
</dbReference>
<dbReference type="STRING" id="511145.b2266"/>
<dbReference type="iPTMnet" id="P0AEH5"/>
<dbReference type="jPOST" id="P0AEH5"/>
<dbReference type="PaxDb" id="511145-b2266"/>
<dbReference type="EnsemblBacteria" id="AAC75326">
    <property type="protein sequence ID" value="AAC75326"/>
    <property type="gene ID" value="b2266"/>
</dbReference>
<dbReference type="GeneID" id="75205683"/>
<dbReference type="GeneID" id="946751"/>
<dbReference type="KEGG" id="ecj:JW2261"/>
<dbReference type="KEGG" id="eco:b2266"/>
<dbReference type="KEGG" id="ecoc:C3026_12655"/>
<dbReference type="PATRIC" id="fig|1411691.4.peg.4470"/>
<dbReference type="EchoBASE" id="EB2977"/>
<dbReference type="eggNOG" id="COG4575">
    <property type="taxonomic scope" value="Bacteria"/>
</dbReference>
<dbReference type="HOGENOM" id="CLU_132623_0_2_6"/>
<dbReference type="InParanoid" id="P0AEH5"/>
<dbReference type="OMA" id="YVQENPW"/>
<dbReference type="OrthoDB" id="5298386at2"/>
<dbReference type="PhylomeDB" id="P0AEH5"/>
<dbReference type="BioCyc" id="EcoCyc:G7173-MONOMER"/>
<dbReference type="PRO" id="PR:P0AEH5"/>
<dbReference type="Proteomes" id="UP000000625">
    <property type="component" value="Chromosome"/>
</dbReference>
<dbReference type="GO" id="GO:0005829">
    <property type="term" value="C:cytosol"/>
    <property type="evidence" value="ECO:0000314"/>
    <property type="project" value="EcoCyc"/>
</dbReference>
<dbReference type="GO" id="GO:0005886">
    <property type="term" value="C:plasma membrane"/>
    <property type="evidence" value="ECO:0000314"/>
    <property type="project" value="EcoCyc"/>
</dbReference>
<dbReference type="GO" id="GO:0043022">
    <property type="term" value="F:ribosome binding"/>
    <property type="evidence" value="ECO:0007669"/>
    <property type="project" value="InterPro"/>
</dbReference>
<dbReference type="GO" id="GO:0033554">
    <property type="term" value="P:cellular response to stress"/>
    <property type="evidence" value="ECO:0000315"/>
    <property type="project" value="EcoCyc"/>
</dbReference>
<dbReference type="GO" id="GO:0006974">
    <property type="term" value="P:DNA damage response"/>
    <property type="evidence" value="ECO:0000270"/>
    <property type="project" value="EcoliWiki"/>
</dbReference>
<dbReference type="InterPro" id="IPR043605">
    <property type="entry name" value="DUF883_C"/>
</dbReference>
<dbReference type="InterPro" id="IPR043604">
    <property type="entry name" value="DUF883_N"/>
</dbReference>
<dbReference type="InterPro" id="IPR010279">
    <property type="entry name" value="YqjD/ElaB"/>
</dbReference>
<dbReference type="NCBIfam" id="NF007709">
    <property type="entry name" value="PRK10404.1"/>
    <property type="match status" value="1"/>
</dbReference>
<dbReference type="PANTHER" id="PTHR35893">
    <property type="entry name" value="INNER MEMBRANE PROTEIN-RELATED"/>
    <property type="match status" value="1"/>
</dbReference>
<dbReference type="PANTHER" id="PTHR35893:SF1">
    <property type="entry name" value="PROTEIN ELAB"/>
    <property type="match status" value="1"/>
</dbReference>
<dbReference type="Pfam" id="PF05957">
    <property type="entry name" value="DUF883"/>
    <property type="match status" value="1"/>
</dbReference>
<dbReference type="Pfam" id="PF19029">
    <property type="entry name" value="DUF883_C"/>
    <property type="match status" value="1"/>
</dbReference>
<evidence type="ECO:0000255" key="1"/>
<evidence type="ECO:0000269" key="2">
    <source>
    </source>
</evidence>
<evidence type="ECO:0000269" key="3">
    <source>
    </source>
</evidence>
<evidence type="ECO:0000305" key="4"/>